<reference key="1">
    <citation type="submission" date="2008-02" db="EMBL/GenBank/DDBJ databases">
        <title>Complete sequence of chromosome of Methylobacterium sp. 4-46.</title>
        <authorList>
            <consortium name="US DOE Joint Genome Institute"/>
            <person name="Copeland A."/>
            <person name="Lucas S."/>
            <person name="Lapidus A."/>
            <person name="Glavina del Rio T."/>
            <person name="Dalin E."/>
            <person name="Tice H."/>
            <person name="Bruce D."/>
            <person name="Goodwin L."/>
            <person name="Pitluck S."/>
            <person name="Chertkov O."/>
            <person name="Brettin T."/>
            <person name="Detter J.C."/>
            <person name="Han C."/>
            <person name="Kuske C.R."/>
            <person name="Schmutz J."/>
            <person name="Larimer F."/>
            <person name="Land M."/>
            <person name="Hauser L."/>
            <person name="Kyrpides N."/>
            <person name="Ivanova N."/>
            <person name="Marx C.J."/>
            <person name="Richardson P."/>
        </authorList>
    </citation>
    <scope>NUCLEOTIDE SEQUENCE [LARGE SCALE GENOMIC DNA]</scope>
    <source>
        <strain>4-46</strain>
    </source>
</reference>
<organism>
    <name type="scientific">Methylobacterium sp. (strain 4-46)</name>
    <dbReference type="NCBI Taxonomy" id="426117"/>
    <lineage>
        <taxon>Bacteria</taxon>
        <taxon>Pseudomonadati</taxon>
        <taxon>Pseudomonadota</taxon>
        <taxon>Alphaproteobacteria</taxon>
        <taxon>Hyphomicrobiales</taxon>
        <taxon>Methylobacteriaceae</taxon>
        <taxon>Methylobacterium</taxon>
    </lineage>
</organism>
<proteinExistence type="inferred from homology"/>
<accession>B0UPJ5</accession>
<sequence>MTDLHSLESDLLAQVEGAADEAALEGVRVAALGKKGAVSELLKTLGSLSPEERRERGPLINGLRDRVQGAILARRETLAEAALAARLSAERIDVTLPVREGPETRGRVHPITQVIDEITAIFGDMGFAVAEGPDIETDELNFTALNFPEGHPAREMHDTFFLPPGRDGTRKLLRTHTSPVQVRTMRSQQPPIRVICPGRTYRHDSDQTHTPMFHQVEGLVIDRTATLAHLKWILEEFCKAFFEVESVKMRFRPSFFPFTEPSAEVDIQCSRKGGEIRFGEGDDWLEILGCGMVHPNVLRQCGLDPDEVQGFAWGMGIDRIAMLKYGMPDLRPFFEADVRWLDHYGFRPLDIPSLVGGLTG</sequence>
<comment type="catalytic activity">
    <reaction evidence="1">
        <text>tRNA(Phe) + L-phenylalanine + ATP = L-phenylalanyl-tRNA(Phe) + AMP + diphosphate + H(+)</text>
        <dbReference type="Rhea" id="RHEA:19413"/>
        <dbReference type="Rhea" id="RHEA-COMP:9668"/>
        <dbReference type="Rhea" id="RHEA-COMP:9699"/>
        <dbReference type="ChEBI" id="CHEBI:15378"/>
        <dbReference type="ChEBI" id="CHEBI:30616"/>
        <dbReference type="ChEBI" id="CHEBI:33019"/>
        <dbReference type="ChEBI" id="CHEBI:58095"/>
        <dbReference type="ChEBI" id="CHEBI:78442"/>
        <dbReference type="ChEBI" id="CHEBI:78531"/>
        <dbReference type="ChEBI" id="CHEBI:456215"/>
        <dbReference type="EC" id="6.1.1.20"/>
    </reaction>
</comment>
<comment type="cofactor">
    <cofactor evidence="1">
        <name>Mg(2+)</name>
        <dbReference type="ChEBI" id="CHEBI:18420"/>
    </cofactor>
    <text evidence="1">Binds 2 magnesium ions per tetramer.</text>
</comment>
<comment type="subunit">
    <text evidence="1">Tetramer of two alpha and two beta subunits.</text>
</comment>
<comment type="subcellular location">
    <subcellularLocation>
        <location evidence="1">Cytoplasm</location>
    </subcellularLocation>
</comment>
<comment type="similarity">
    <text evidence="1">Belongs to the class-II aminoacyl-tRNA synthetase family. Phe-tRNA synthetase alpha subunit type 1 subfamily.</text>
</comment>
<gene>
    <name evidence="1" type="primary">pheS</name>
    <name type="ordered locus">M446_5319</name>
</gene>
<dbReference type="EC" id="6.1.1.20" evidence="1"/>
<dbReference type="EMBL" id="CP000943">
    <property type="protein sequence ID" value="ACA19637.1"/>
    <property type="molecule type" value="Genomic_DNA"/>
</dbReference>
<dbReference type="RefSeq" id="WP_012335022.1">
    <property type="nucleotide sequence ID" value="NC_010511.1"/>
</dbReference>
<dbReference type="SMR" id="B0UPJ5"/>
<dbReference type="STRING" id="426117.M446_5319"/>
<dbReference type="KEGG" id="met:M446_5319"/>
<dbReference type="eggNOG" id="COG0016">
    <property type="taxonomic scope" value="Bacteria"/>
</dbReference>
<dbReference type="HOGENOM" id="CLU_025086_0_1_5"/>
<dbReference type="GO" id="GO:0005737">
    <property type="term" value="C:cytoplasm"/>
    <property type="evidence" value="ECO:0007669"/>
    <property type="project" value="UniProtKB-SubCell"/>
</dbReference>
<dbReference type="GO" id="GO:0005524">
    <property type="term" value="F:ATP binding"/>
    <property type="evidence" value="ECO:0007669"/>
    <property type="project" value="UniProtKB-UniRule"/>
</dbReference>
<dbReference type="GO" id="GO:0000287">
    <property type="term" value="F:magnesium ion binding"/>
    <property type="evidence" value="ECO:0007669"/>
    <property type="project" value="UniProtKB-UniRule"/>
</dbReference>
<dbReference type="GO" id="GO:0004826">
    <property type="term" value="F:phenylalanine-tRNA ligase activity"/>
    <property type="evidence" value="ECO:0007669"/>
    <property type="project" value="UniProtKB-UniRule"/>
</dbReference>
<dbReference type="GO" id="GO:0000049">
    <property type="term" value="F:tRNA binding"/>
    <property type="evidence" value="ECO:0007669"/>
    <property type="project" value="InterPro"/>
</dbReference>
<dbReference type="GO" id="GO:0006432">
    <property type="term" value="P:phenylalanyl-tRNA aminoacylation"/>
    <property type="evidence" value="ECO:0007669"/>
    <property type="project" value="UniProtKB-UniRule"/>
</dbReference>
<dbReference type="CDD" id="cd00496">
    <property type="entry name" value="PheRS_alpha_core"/>
    <property type="match status" value="1"/>
</dbReference>
<dbReference type="FunFam" id="3.30.930.10:FF:000003">
    <property type="entry name" value="Phenylalanine--tRNA ligase alpha subunit"/>
    <property type="match status" value="1"/>
</dbReference>
<dbReference type="Gene3D" id="3.30.930.10">
    <property type="entry name" value="Bira Bifunctional Protein, Domain 2"/>
    <property type="match status" value="1"/>
</dbReference>
<dbReference type="HAMAP" id="MF_00281">
    <property type="entry name" value="Phe_tRNA_synth_alpha1"/>
    <property type="match status" value="1"/>
</dbReference>
<dbReference type="InterPro" id="IPR006195">
    <property type="entry name" value="aa-tRNA-synth_II"/>
</dbReference>
<dbReference type="InterPro" id="IPR045864">
    <property type="entry name" value="aa-tRNA-synth_II/BPL/LPL"/>
</dbReference>
<dbReference type="InterPro" id="IPR004529">
    <property type="entry name" value="Phe-tRNA-synth_IIc_asu"/>
</dbReference>
<dbReference type="InterPro" id="IPR004188">
    <property type="entry name" value="Phe-tRNA_ligase_II_N"/>
</dbReference>
<dbReference type="InterPro" id="IPR022911">
    <property type="entry name" value="Phe_tRNA_ligase_alpha1_bac"/>
</dbReference>
<dbReference type="InterPro" id="IPR002319">
    <property type="entry name" value="Phenylalanyl-tRNA_Synthase"/>
</dbReference>
<dbReference type="InterPro" id="IPR010978">
    <property type="entry name" value="tRNA-bd_arm"/>
</dbReference>
<dbReference type="NCBIfam" id="TIGR00468">
    <property type="entry name" value="pheS"/>
    <property type="match status" value="1"/>
</dbReference>
<dbReference type="PANTHER" id="PTHR11538:SF41">
    <property type="entry name" value="PHENYLALANINE--TRNA LIGASE, MITOCHONDRIAL"/>
    <property type="match status" value="1"/>
</dbReference>
<dbReference type="PANTHER" id="PTHR11538">
    <property type="entry name" value="PHENYLALANYL-TRNA SYNTHETASE"/>
    <property type="match status" value="1"/>
</dbReference>
<dbReference type="Pfam" id="PF02912">
    <property type="entry name" value="Phe_tRNA-synt_N"/>
    <property type="match status" value="1"/>
</dbReference>
<dbReference type="Pfam" id="PF01409">
    <property type="entry name" value="tRNA-synt_2d"/>
    <property type="match status" value="1"/>
</dbReference>
<dbReference type="SUPFAM" id="SSF55681">
    <property type="entry name" value="Class II aaRS and biotin synthetases"/>
    <property type="match status" value="1"/>
</dbReference>
<dbReference type="SUPFAM" id="SSF46589">
    <property type="entry name" value="tRNA-binding arm"/>
    <property type="match status" value="1"/>
</dbReference>
<dbReference type="PROSITE" id="PS50862">
    <property type="entry name" value="AA_TRNA_LIGASE_II"/>
    <property type="match status" value="1"/>
</dbReference>
<evidence type="ECO:0000255" key="1">
    <source>
        <dbReference type="HAMAP-Rule" id="MF_00281"/>
    </source>
</evidence>
<name>SYFA_METS4</name>
<protein>
    <recommendedName>
        <fullName evidence="1">Phenylalanine--tRNA ligase alpha subunit</fullName>
        <ecNumber evidence="1">6.1.1.20</ecNumber>
    </recommendedName>
    <alternativeName>
        <fullName evidence="1">Phenylalanyl-tRNA synthetase alpha subunit</fullName>
        <shortName evidence="1">PheRS</shortName>
    </alternativeName>
</protein>
<feature type="chain" id="PRO_1000114892" description="Phenylalanine--tRNA ligase alpha subunit">
    <location>
        <begin position="1"/>
        <end position="360"/>
    </location>
</feature>
<feature type="binding site" evidence="1">
    <location>
        <position position="260"/>
    </location>
    <ligand>
        <name>Mg(2+)</name>
        <dbReference type="ChEBI" id="CHEBI:18420"/>
        <note>shared with beta subunit</note>
    </ligand>
</feature>
<keyword id="KW-0030">Aminoacyl-tRNA synthetase</keyword>
<keyword id="KW-0067">ATP-binding</keyword>
<keyword id="KW-0963">Cytoplasm</keyword>
<keyword id="KW-0436">Ligase</keyword>
<keyword id="KW-0460">Magnesium</keyword>
<keyword id="KW-0479">Metal-binding</keyword>
<keyword id="KW-0547">Nucleotide-binding</keyword>
<keyword id="KW-0648">Protein biosynthesis</keyword>